<gene>
    <name evidence="6" type="primary">ABCG40</name>
    <name evidence="4 5" type="synonym">PDR4</name>
    <name evidence="10" type="ordered locus">Os02g0318450/Os02g0318500</name>
    <name type="ordered locus">LOC_Os02g21340</name>
    <name evidence="8" type="ORF">OJ1134_B09.15</name>
    <name evidence="9" type="ORF">OSJNBa0086N11.3</name>
</gene>
<protein>
    <recommendedName>
        <fullName evidence="6">ABC transporter G family member 40</fullName>
        <shortName evidence="6">OsABCG40</shortName>
    </recommendedName>
    <alternativeName>
        <fullName evidence="4 5">Pleiotropic drug resistance protein 4</fullName>
        <shortName evidence="5">OsPDR4</shortName>
    </alternativeName>
</protein>
<evidence type="ECO:0000255" key="1"/>
<evidence type="ECO:0000255" key="2">
    <source>
        <dbReference type="PROSITE-ProRule" id="PRU00434"/>
    </source>
</evidence>
<evidence type="ECO:0000256" key="3">
    <source>
        <dbReference type="SAM" id="MobiDB-lite"/>
    </source>
</evidence>
<evidence type="ECO:0000303" key="4">
    <source>
    </source>
</evidence>
<evidence type="ECO:0000303" key="5">
    <source>
    </source>
</evidence>
<evidence type="ECO:0000303" key="6">
    <source>
    </source>
</evidence>
<evidence type="ECO:0000305" key="7"/>
<evidence type="ECO:0000312" key="8">
    <source>
        <dbReference type="EMBL" id="BAD27654.1"/>
    </source>
</evidence>
<evidence type="ECO:0000312" key="9">
    <source>
        <dbReference type="EMBL" id="BAD28939.1"/>
    </source>
</evidence>
<evidence type="ECO:0000312" key="10">
    <source>
        <dbReference type="EMBL" id="BAF08592.2"/>
    </source>
</evidence>
<keyword id="KW-0067">ATP-binding</keyword>
<keyword id="KW-0472">Membrane</keyword>
<keyword id="KW-0547">Nucleotide-binding</keyword>
<keyword id="KW-1185">Reference proteome</keyword>
<keyword id="KW-0677">Repeat</keyword>
<keyword id="KW-0812">Transmembrane</keyword>
<keyword id="KW-1133">Transmembrane helix</keyword>
<keyword id="KW-0813">Transport</keyword>
<sequence>MSHRHHAALVASASGRSPSWGSAISQSFRQVEAEDPFRRAQSMRGHDEEEEDLRWAALEKLPTYDRMRRGVVRSALLRDGDDDHKDDDDAGTGKAVELVDIGRLATGDAARALVERLLQDDSERFLRRLRDRIDMVGIELPKIEIRYEELSVQADAFVASRALPTLSNSAINFLQGLIGQFGSSNKKTINILKQVNGILKSSRMTLLLGPPSSGKSTLMRALTGKLDKNLKVFGNITYCGHKFSEFYPERTSAYVSQYDLHNAEMTVRETLDFSRWCLGIGSRYDMLTEISRRERNAGIKPDPEIDAFMKATAMQGQETNIITDLILKVLGLDICADTIVGDEMIRGISGGQMKRVTTGEMLTGPARALLMDEISTGLDSSSTFHIVKFIRHLVHIMNETVMISLLQPPPETYNLFDDIVLLSEGYIVYHGPRENILEFFEASGFRCPQRKAVADFLQEVTSKKDQQQYWFLDKEPYCYVSVPEFAERFKSFYIGQQMMKEQHIPFEKSKIHPAALTTMKNALSNWESLKAVLCREKLLMKRNSFLYIFKVTQLIILAFLSMTVFLRTKMPHGQFSDGTKFLGALTFNLITVMFNGLSELNLTVKKLPVFYKHRDFLFFPPWTFGVANILIKVPVSLVEATVWVVITYYVMGFAPAAGRFFRQFLAFFVTHLMAMALFRFLGAILQTMVIAISFGMLVLLIVFVFGGFVIRKNDIRPWWIWCYWASPMMYSQNAISINEFLASRWAIPNNDTTIDAKTVGEAILKSKGLFTGEWGFWLSIGALVGFIILFNTLYILALTYLSPIRSANALVIDEHNETELYTETRNEEHRSRTSTTTSSIPTSANGEGNRPTQSQFVLPFQPLSLCFNHLNYYVDMPSEMKQQGLMESRLQLLSDISGAFRPGLLTALVGVSGAGKTTLMDVLAGRKTSGTIEGSITLSGYSKKQETFARISGYCEQADIHSPNVTVYESILYSAWLRLPSDVDSNTRKMFVEEVMALVELDVLCNAMVGLPGVSGLSTEQRKRLTIAVELVANPSIIFMDEPTSGLDARAAAIVMRTVRNTVNTGRTVVCTIHQPSIDIFESFDELLLLKRGGRVIYAGELGDHSHKLVEYFETILGVPSITEGYNPATWMLEVSSTLEEARMNVDFAEIYANSLLYRKNQELIEELSIPPPGYRDLLFATKYSQSFYIQCVANLWKQYKSYWKNPSYNSLRYLTTFLYGLFFGTVFWQKGTKLDSQQDLYNLLGATYAAIFFIGATNCMSVQPVVSIERAVYYRESAAGMYSPLSYAFAQASVEFIYNIIQGILYTVIIYAMIGYDWKASKFFYFLFFIVSSFNYFTFFGMMLVACTPSALLANILITFALPLWNLFAGFLIFRKAIPIWWRWYYWANPVSWTIYGVIASQFGGNGGSISVPGGSHVAMSQILEDNVGVRHDFLGYVILAHFGFMAAFVLIFGYSIKFLNFQKR</sequence>
<accession>Q8GU85</accession>
<accession>Q0E1P6</accession>
<name>AB40G_ORYSJ</name>
<reference key="1">
    <citation type="journal article" date="2003" name="Plant Physiol.">
        <title>The ATP-binding cassette transporters: structure, function, and gene family comparison between rice and Arabidopsis.</title>
        <authorList>
            <person name="Jasinski M."/>
            <person name="Ducos E."/>
            <person name="Martinoia E."/>
            <person name="Boutry M."/>
        </authorList>
    </citation>
    <scope>NUCLEOTIDE SEQUENCE [GENOMIC DNA]</scope>
    <source>
        <strain>cv. Nipponbare</strain>
    </source>
</reference>
<reference key="2">
    <citation type="journal article" date="2005" name="Nature">
        <title>The map-based sequence of the rice genome.</title>
        <authorList>
            <consortium name="International rice genome sequencing project (IRGSP)"/>
        </authorList>
    </citation>
    <scope>NUCLEOTIDE SEQUENCE [LARGE SCALE GENOMIC DNA]</scope>
    <source>
        <strain>cv. Nipponbare</strain>
    </source>
</reference>
<reference key="3">
    <citation type="journal article" date="2008" name="Nucleic Acids Res.">
        <title>The rice annotation project database (RAP-DB): 2008 update.</title>
        <authorList>
            <consortium name="The rice annotation project (RAP)"/>
        </authorList>
    </citation>
    <scope>GENOME REANNOTATION</scope>
    <source>
        <strain>cv. Nipponbare</strain>
    </source>
</reference>
<reference key="4">
    <citation type="journal article" date="2013" name="Rice">
        <title>Improvement of the Oryza sativa Nipponbare reference genome using next generation sequence and optical map data.</title>
        <authorList>
            <person name="Kawahara Y."/>
            <person name="de la Bastide M."/>
            <person name="Hamilton J.P."/>
            <person name="Kanamori H."/>
            <person name="McCombie W.R."/>
            <person name="Ouyang S."/>
            <person name="Schwartz D.C."/>
            <person name="Tanaka T."/>
            <person name="Wu J."/>
            <person name="Zhou S."/>
            <person name="Childs K.L."/>
            <person name="Davidson R.M."/>
            <person name="Lin H."/>
            <person name="Quesada-Ocampo L."/>
            <person name="Vaillancourt B."/>
            <person name="Sakai H."/>
            <person name="Lee S.S."/>
            <person name="Kim J."/>
            <person name="Numa H."/>
            <person name="Itoh T."/>
            <person name="Buell C.R."/>
            <person name="Matsumoto T."/>
        </authorList>
    </citation>
    <scope>GENOME REANNOTATION</scope>
    <source>
        <strain>cv. Nipponbare</strain>
    </source>
</reference>
<reference key="5">
    <citation type="journal article" date="2006" name="FEBS Lett.">
        <title>Organization and function of the plant pleiotropic drug resistance ABC transporter family.</title>
        <authorList>
            <person name="Crouzet J."/>
            <person name="Trombik T."/>
            <person name="Fraysse A.S."/>
            <person name="Boutry M."/>
        </authorList>
    </citation>
    <scope>GENE FAMILY</scope>
    <scope>NOMENCLATURE</scope>
</reference>
<reference key="6">
    <citation type="journal article" date="2008" name="Trends Plant Sci.">
        <title>Plant ABC proteins - a unified nomenclature and updated inventory.</title>
        <authorList>
            <person name="Verrier P.J."/>
            <person name="Bird D."/>
            <person name="Burla B."/>
            <person name="Dassa E."/>
            <person name="Forestier C."/>
            <person name="Geisler M."/>
            <person name="Klein M."/>
            <person name="Kolukisaoglu H.U."/>
            <person name="Lee Y."/>
            <person name="Martinoia E."/>
            <person name="Murphy A."/>
            <person name="Rea P.A."/>
            <person name="Samuels L."/>
            <person name="Schulz B."/>
            <person name="Spalding E.J."/>
            <person name="Yazaki K."/>
            <person name="Theodoulou F.L."/>
        </authorList>
    </citation>
    <scope>GENE FAMILY</scope>
    <scope>NOMENCLATURE</scope>
</reference>
<comment type="subcellular location">
    <subcellularLocation>
        <location evidence="1">Membrane</location>
        <topology evidence="1">Multi-pass membrane protein</topology>
    </subcellularLocation>
</comment>
<comment type="similarity">
    <text evidence="7">Belongs to the ABC transporter superfamily. ABCG family. PDR (TC 3.A.1.205) subfamily.</text>
</comment>
<comment type="sequence caution" evidence="7">
    <conflict type="erroneous gene model prediction">
        <sequence resource="EMBL-CDS" id="BAD27654"/>
    </conflict>
</comment>
<comment type="sequence caution" evidence="7">
    <conflict type="erroneous gene model prediction">
        <sequence resource="EMBL-CDS" id="BAD28939"/>
    </conflict>
</comment>
<comment type="sequence caution" evidence="7">
    <conflict type="erroneous gene model prediction">
        <sequence resource="EMBL-CDS" id="BAF08592"/>
    </conflict>
</comment>
<comment type="sequence caution" evidence="7">
    <conflict type="erroneous gene model prediction">
        <sequence resource="EMBL-CDS" id="CAD59573"/>
    </conflict>
</comment>
<proteinExistence type="inferred from homology"/>
<dbReference type="EMBL" id="AJ535051">
    <property type="protein sequence ID" value="CAD59573.1"/>
    <property type="status" value="ALT_SEQ"/>
    <property type="molecule type" value="Genomic_DNA"/>
</dbReference>
<dbReference type="EMBL" id="AP004024">
    <property type="protein sequence ID" value="BAD27654.1"/>
    <property type="status" value="ALT_SEQ"/>
    <property type="molecule type" value="Genomic_DNA"/>
</dbReference>
<dbReference type="EMBL" id="AP005651">
    <property type="protein sequence ID" value="BAD28939.1"/>
    <property type="status" value="ALT_SEQ"/>
    <property type="molecule type" value="Genomic_DNA"/>
</dbReference>
<dbReference type="EMBL" id="AP008208">
    <property type="protein sequence ID" value="BAF08592.2"/>
    <property type="status" value="ALT_SEQ"/>
    <property type="molecule type" value="Genomic_DNA"/>
</dbReference>
<dbReference type="EMBL" id="AP014958">
    <property type="status" value="NOT_ANNOTATED_CDS"/>
    <property type="molecule type" value="Genomic_DNA"/>
</dbReference>
<dbReference type="SMR" id="Q8GU85"/>
<dbReference type="FunCoup" id="Q8GU85">
    <property type="interactions" value="460"/>
</dbReference>
<dbReference type="STRING" id="39947.Q8GU85"/>
<dbReference type="PaxDb" id="39947-Q8GU85"/>
<dbReference type="KEGG" id="dosa:Os02g0318500"/>
<dbReference type="eggNOG" id="KOG0065">
    <property type="taxonomic scope" value="Eukaryota"/>
</dbReference>
<dbReference type="HOGENOM" id="CLU_000604_35_3_1"/>
<dbReference type="InParanoid" id="Q8GU85"/>
<dbReference type="Proteomes" id="UP000000763">
    <property type="component" value="Chromosome 2"/>
</dbReference>
<dbReference type="Proteomes" id="UP000059680">
    <property type="component" value="Chromosome 2"/>
</dbReference>
<dbReference type="GO" id="GO:0005886">
    <property type="term" value="C:plasma membrane"/>
    <property type="evidence" value="ECO:0007669"/>
    <property type="project" value="UniProtKB-ARBA"/>
</dbReference>
<dbReference type="GO" id="GO:0140359">
    <property type="term" value="F:ABC-type transporter activity"/>
    <property type="evidence" value="ECO:0007669"/>
    <property type="project" value="InterPro"/>
</dbReference>
<dbReference type="GO" id="GO:0005524">
    <property type="term" value="F:ATP binding"/>
    <property type="evidence" value="ECO:0007669"/>
    <property type="project" value="UniProtKB-KW"/>
</dbReference>
<dbReference type="GO" id="GO:0016887">
    <property type="term" value="F:ATP hydrolysis activity"/>
    <property type="evidence" value="ECO:0007669"/>
    <property type="project" value="InterPro"/>
</dbReference>
<dbReference type="CDD" id="cd03233">
    <property type="entry name" value="ABCG_PDR_domain1"/>
    <property type="match status" value="1"/>
</dbReference>
<dbReference type="CDD" id="cd03232">
    <property type="entry name" value="ABCG_PDR_domain2"/>
    <property type="match status" value="1"/>
</dbReference>
<dbReference type="FunFam" id="3.40.50.300:FF:000157">
    <property type="entry name" value="ABC transporter G family member 34"/>
    <property type="match status" value="1"/>
</dbReference>
<dbReference type="FunFam" id="3.40.50.300:FF:000179">
    <property type="entry name" value="ABC transporter G family member 34"/>
    <property type="match status" value="1"/>
</dbReference>
<dbReference type="Gene3D" id="3.40.50.300">
    <property type="entry name" value="P-loop containing nucleotide triphosphate hydrolases"/>
    <property type="match status" value="2"/>
</dbReference>
<dbReference type="InterPro" id="IPR003593">
    <property type="entry name" value="AAA+_ATPase"/>
</dbReference>
<dbReference type="InterPro" id="IPR013525">
    <property type="entry name" value="ABC2_TM"/>
</dbReference>
<dbReference type="InterPro" id="IPR029481">
    <property type="entry name" value="ABC_trans_N"/>
</dbReference>
<dbReference type="InterPro" id="IPR003439">
    <property type="entry name" value="ABC_transporter-like_ATP-bd"/>
</dbReference>
<dbReference type="InterPro" id="IPR043926">
    <property type="entry name" value="ABCG_dom"/>
</dbReference>
<dbReference type="InterPro" id="IPR034001">
    <property type="entry name" value="ABCG_PDR_1"/>
</dbReference>
<dbReference type="InterPro" id="IPR034003">
    <property type="entry name" value="ABCG_PDR_2"/>
</dbReference>
<dbReference type="InterPro" id="IPR027417">
    <property type="entry name" value="P-loop_NTPase"/>
</dbReference>
<dbReference type="InterPro" id="IPR013581">
    <property type="entry name" value="PDR_assoc"/>
</dbReference>
<dbReference type="PANTHER" id="PTHR19241">
    <property type="entry name" value="ATP-BINDING CASSETTE TRANSPORTER"/>
    <property type="match status" value="1"/>
</dbReference>
<dbReference type="Pfam" id="PF01061">
    <property type="entry name" value="ABC2_membrane"/>
    <property type="match status" value="2"/>
</dbReference>
<dbReference type="Pfam" id="PF19055">
    <property type="entry name" value="ABC2_membrane_7"/>
    <property type="match status" value="1"/>
</dbReference>
<dbReference type="Pfam" id="PF00005">
    <property type="entry name" value="ABC_tran"/>
    <property type="match status" value="2"/>
</dbReference>
<dbReference type="Pfam" id="PF14510">
    <property type="entry name" value="ABC_trans_N"/>
    <property type="match status" value="1"/>
</dbReference>
<dbReference type="Pfam" id="PF08370">
    <property type="entry name" value="PDR_assoc"/>
    <property type="match status" value="1"/>
</dbReference>
<dbReference type="SMART" id="SM00382">
    <property type="entry name" value="AAA"/>
    <property type="match status" value="2"/>
</dbReference>
<dbReference type="SUPFAM" id="SSF52540">
    <property type="entry name" value="P-loop containing nucleoside triphosphate hydrolases"/>
    <property type="match status" value="2"/>
</dbReference>
<dbReference type="PROSITE" id="PS50893">
    <property type="entry name" value="ABC_TRANSPORTER_2"/>
    <property type="match status" value="2"/>
</dbReference>
<feature type="chain" id="PRO_0000433452" description="ABC transporter G family member 40">
    <location>
        <begin position="1"/>
        <end position="1466"/>
    </location>
</feature>
<feature type="transmembrane region" description="Helical" evidence="1">
    <location>
        <begin position="545"/>
        <end position="565"/>
    </location>
</feature>
<feature type="transmembrane region" description="Helical" evidence="1">
    <location>
        <begin position="581"/>
        <end position="601"/>
    </location>
</feature>
<feature type="transmembrane region" description="Helical" evidence="1">
    <location>
        <begin position="633"/>
        <end position="653"/>
    </location>
</feature>
<feature type="transmembrane region" description="Helical" evidence="1">
    <location>
        <begin position="664"/>
        <end position="684"/>
    </location>
</feature>
<feature type="transmembrane region" description="Helical" evidence="1">
    <location>
        <begin position="690"/>
        <end position="710"/>
    </location>
</feature>
<feature type="transmembrane region" description="Helical" evidence="1">
    <location>
        <begin position="776"/>
        <end position="796"/>
    </location>
</feature>
<feature type="transmembrane region" description="Helical" evidence="1">
    <location>
        <begin position="1209"/>
        <end position="1229"/>
    </location>
</feature>
<feature type="transmembrane region" description="Helical" evidence="1">
    <location>
        <begin position="1241"/>
        <end position="1261"/>
    </location>
</feature>
<feature type="transmembrane region" description="Helical" evidence="1">
    <location>
        <begin position="1297"/>
        <end position="1317"/>
    </location>
</feature>
<feature type="transmembrane region" description="Helical" evidence="1">
    <location>
        <begin position="1327"/>
        <end position="1347"/>
    </location>
</feature>
<feature type="transmembrane region" description="Helical" evidence="1">
    <location>
        <begin position="1355"/>
        <end position="1375"/>
    </location>
</feature>
<feature type="transmembrane region" description="Helical" evidence="1">
    <location>
        <begin position="1396"/>
        <end position="1416"/>
    </location>
</feature>
<feature type="transmembrane region" description="Helical" evidence="1">
    <location>
        <begin position="1435"/>
        <end position="1455"/>
    </location>
</feature>
<feature type="domain" description="ABC transporter 1" evidence="2">
    <location>
        <begin position="176"/>
        <end position="449"/>
    </location>
</feature>
<feature type="domain" description="ABC transmembrane type-2 1" evidence="7">
    <location>
        <begin position="527"/>
        <end position="740"/>
    </location>
</feature>
<feature type="domain" description="ABC transporter 2" evidence="2">
    <location>
        <begin position="865"/>
        <end position="1117"/>
    </location>
</feature>
<feature type="domain" description="ABC transmembrane type-2 2" evidence="7">
    <location>
        <begin position="1190"/>
        <end position="1404"/>
    </location>
</feature>
<feature type="region of interest" description="Disordered" evidence="3">
    <location>
        <begin position="1"/>
        <end position="21"/>
    </location>
</feature>
<feature type="region of interest" description="Disordered" evidence="3">
    <location>
        <begin position="821"/>
        <end position="851"/>
    </location>
</feature>
<feature type="compositionally biased region" description="Basic and acidic residues" evidence="3">
    <location>
        <begin position="821"/>
        <end position="831"/>
    </location>
</feature>
<feature type="compositionally biased region" description="Low complexity" evidence="3">
    <location>
        <begin position="833"/>
        <end position="843"/>
    </location>
</feature>
<feature type="binding site" evidence="2">
    <location>
        <begin position="209"/>
        <end position="216"/>
    </location>
    <ligand>
        <name>ATP</name>
        <dbReference type="ChEBI" id="CHEBI:30616"/>
        <label>1</label>
    </ligand>
</feature>
<feature type="binding site" evidence="2">
    <location>
        <begin position="910"/>
        <end position="917"/>
    </location>
    <ligand>
        <name>ATP</name>
        <dbReference type="ChEBI" id="CHEBI:30616"/>
        <label>2</label>
    </ligand>
</feature>
<organism>
    <name type="scientific">Oryza sativa subsp. japonica</name>
    <name type="common">Rice</name>
    <dbReference type="NCBI Taxonomy" id="39947"/>
    <lineage>
        <taxon>Eukaryota</taxon>
        <taxon>Viridiplantae</taxon>
        <taxon>Streptophyta</taxon>
        <taxon>Embryophyta</taxon>
        <taxon>Tracheophyta</taxon>
        <taxon>Spermatophyta</taxon>
        <taxon>Magnoliopsida</taxon>
        <taxon>Liliopsida</taxon>
        <taxon>Poales</taxon>
        <taxon>Poaceae</taxon>
        <taxon>BOP clade</taxon>
        <taxon>Oryzoideae</taxon>
        <taxon>Oryzeae</taxon>
        <taxon>Oryzinae</taxon>
        <taxon>Oryza</taxon>
        <taxon>Oryza sativa</taxon>
    </lineage>
</organism>